<gene>
    <name type="primary">pmi</name>
    <name type="ordered locus">R02982</name>
    <name type="ORF">SMc03111</name>
</gene>
<reference key="1">
    <citation type="journal article" date="1992" name="Gene">
        <title>The Rhizobium meliloti pmi gene encodes a new type of phosphomannose isomerase.</title>
        <authorList>
            <person name="Schmidt M."/>
            <person name="Arnold W."/>
            <person name="Niemann A."/>
            <person name="Kleickmann A."/>
            <person name="Puehler A."/>
        </authorList>
    </citation>
    <scope>NUCLEOTIDE SEQUENCE [GENOMIC DNA]</scope>
    <source>
        <strain>RCR2011 / SU47</strain>
    </source>
</reference>
<reference key="2">
    <citation type="journal article" date="2001" name="Proc. Natl. Acad. Sci. U.S.A.">
        <title>Analysis of the chromosome sequence of the legume symbiont Sinorhizobium meliloti strain 1021.</title>
        <authorList>
            <person name="Capela D."/>
            <person name="Barloy-Hubler F."/>
            <person name="Gouzy J."/>
            <person name="Bothe G."/>
            <person name="Ampe F."/>
            <person name="Batut J."/>
            <person name="Boistard P."/>
            <person name="Becker A."/>
            <person name="Boutry M."/>
            <person name="Cadieu E."/>
            <person name="Dreano S."/>
            <person name="Gloux S."/>
            <person name="Godrie T."/>
            <person name="Goffeau A."/>
            <person name="Kahn D."/>
            <person name="Kiss E."/>
            <person name="Lelaure V."/>
            <person name="Masuy D."/>
            <person name="Pohl T."/>
            <person name="Portetelle D."/>
            <person name="Puehler A."/>
            <person name="Purnelle B."/>
            <person name="Ramsperger U."/>
            <person name="Renard C."/>
            <person name="Thebault P."/>
            <person name="Vandenbol M."/>
            <person name="Weidner S."/>
            <person name="Galibert F."/>
        </authorList>
    </citation>
    <scope>NUCLEOTIDE SEQUENCE [LARGE SCALE GENOMIC DNA]</scope>
    <source>
        <strain>1021</strain>
    </source>
</reference>
<reference key="3">
    <citation type="journal article" date="2001" name="Science">
        <title>The composite genome of the legume symbiont Sinorhizobium meliloti.</title>
        <authorList>
            <person name="Galibert F."/>
            <person name="Finan T.M."/>
            <person name="Long S.R."/>
            <person name="Puehler A."/>
            <person name="Abola P."/>
            <person name="Ampe F."/>
            <person name="Barloy-Hubler F."/>
            <person name="Barnett M.J."/>
            <person name="Becker A."/>
            <person name="Boistard P."/>
            <person name="Bothe G."/>
            <person name="Boutry M."/>
            <person name="Bowser L."/>
            <person name="Buhrmester J."/>
            <person name="Cadieu E."/>
            <person name="Capela D."/>
            <person name="Chain P."/>
            <person name="Cowie A."/>
            <person name="Davis R.W."/>
            <person name="Dreano S."/>
            <person name="Federspiel N.A."/>
            <person name="Fisher R.F."/>
            <person name="Gloux S."/>
            <person name="Godrie T."/>
            <person name="Goffeau A."/>
            <person name="Golding B."/>
            <person name="Gouzy J."/>
            <person name="Gurjal M."/>
            <person name="Hernandez-Lucas I."/>
            <person name="Hong A."/>
            <person name="Huizar L."/>
            <person name="Hyman R.W."/>
            <person name="Jones T."/>
            <person name="Kahn D."/>
            <person name="Kahn M.L."/>
            <person name="Kalman S."/>
            <person name="Keating D.H."/>
            <person name="Kiss E."/>
            <person name="Komp C."/>
            <person name="Lelaure V."/>
            <person name="Masuy D."/>
            <person name="Palm C."/>
            <person name="Peck M.C."/>
            <person name="Pohl T.M."/>
            <person name="Portetelle D."/>
            <person name="Purnelle B."/>
            <person name="Ramsperger U."/>
            <person name="Surzycki R."/>
            <person name="Thebault P."/>
            <person name="Vandenbol M."/>
            <person name="Vorhoelter F.J."/>
            <person name="Weidner S."/>
            <person name="Wells D.H."/>
            <person name="Wong K."/>
            <person name="Yeh K.-C."/>
            <person name="Batut J."/>
        </authorList>
    </citation>
    <scope>NUCLEOTIDE SEQUENCE [LARGE SCALE GENOMIC DNA]</scope>
    <source>
        <strain>1021</strain>
    </source>
</reference>
<dbReference type="EC" id="5.3.1.8"/>
<dbReference type="EMBL" id="M96584">
    <property type="protein sequence ID" value="AAA26356.1"/>
    <property type="molecule type" value="Genomic_DNA"/>
</dbReference>
<dbReference type="EMBL" id="AL591688">
    <property type="protein sequence ID" value="CAC47561.1"/>
    <property type="molecule type" value="Genomic_DNA"/>
</dbReference>
<dbReference type="RefSeq" id="NP_387088.1">
    <property type="nucleotide sequence ID" value="NC_003047.1"/>
</dbReference>
<dbReference type="RefSeq" id="WP_010970332.1">
    <property type="nucleotide sequence ID" value="NC_003047.1"/>
</dbReference>
<dbReference type="SMR" id="P29954"/>
<dbReference type="EnsemblBacteria" id="CAC47561">
    <property type="protein sequence ID" value="CAC47561"/>
    <property type="gene ID" value="SMc03111"/>
</dbReference>
<dbReference type="KEGG" id="sme:SMc03111"/>
<dbReference type="PATRIC" id="fig|266834.11.peg.4508"/>
<dbReference type="eggNOG" id="COG2942">
    <property type="taxonomic scope" value="Bacteria"/>
</dbReference>
<dbReference type="HOGENOM" id="CLU_046651_1_0_5"/>
<dbReference type="OrthoDB" id="9806359at2"/>
<dbReference type="Proteomes" id="UP000001976">
    <property type="component" value="Chromosome"/>
</dbReference>
<dbReference type="GO" id="GO:0004476">
    <property type="term" value="F:mannose-6-phosphate isomerase activity"/>
    <property type="evidence" value="ECO:0007669"/>
    <property type="project" value="UniProtKB-EC"/>
</dbReference>
<dbReference type="GO" id="GO:0005975">
    <property type="term" value="P:carbohydrate metabolic process"/>
    <property type="evidence" value="ECO:0007669"/>
    <property type="project" value="InterPro"/>
</dbReference>
<dbReference type="CDD" id="cd00249">
    <property type="entry name" value="AGE"/>
    <property type="match status" value="1"/>
</dbReference>
<dbReference type="Gene3D" id="1.50.10.10">
    <property type="match status" value="1"/>
</dbReference>
<dbReference type="InterPro" id="IPR008928">
    <property type="entry name" value="6-hairpin_glycosidase_sf"/>
</dbReference>
<dbReference type="InterPro" id="IPR012341">
    <property type="entry name" value="6hp_glycosidase-like_sf"/>
</dbReference>
<dbReference type="InterPro" id="IPR010819">
    <property type="entry name" value="AGE/CE"/>
</dbReference>
<dbReference type="InterPro" id="IPR034116">
    <property type="entry name" value="AGE_dom"/>
</dbReference>
<dbReference type="PANTHER" id="PTHR15108">
    <property type="entry name" value="N-ACYLGLUCOSAMINE-2-EPIMERASE"/>
    <property type="match status" value="1"/>
</dbReference>
<dbReference type="Pfam" id="PF07221">
    <property type="entry name" value="GlcNAc_2-epim"/>
    <property type="match status" value="1"/>
</dbReference>
<dbReference type="SUPFAM" id="SSF48208">
    <property type="entry name" value="Six-hairpin glycosidases"/>
    <property type="match status" value="1"/>
</dbReference>
<comment type="catalytic activity">
    <reaction>
        <text>D-mannose 6-phosphate = D-fructose 6-phosphate</text>
        <dbReference type="Rhea" id="RHEA:12356"/>
        <dbReference type="ChEBI" id="CHEBI:58735"/>
        <dbReference type="ChEBI" id="CHEBI:61527"/>
        <dbReference type="EC" id="5.3.1.8"/>
    </reaction>
</comment>
<comment type="similarity">
    <text evidence="1">Belongs to the N-acylglucosamine 2-epimerase family.</text>
</comment>
<comment type="caution">
    <text evidence="1">It is uncertain whether Met-1 or Met-3 is the initiator.</text>
</comment>
<accession>P29954</accession>
<name>MANA_RHIME</name>
<evidence type="ECO:0000305" key="1"/>
<feature type="chain" id="PRO_0000208953" description="Mannose-6-phosphate isomerase">
    <location>
        <begin position="1"/>
        <end position="387"/>
    </location>
</feature>
<proteinExistence type="inferred from homology"/>
<sequence length="387" mass="43489">MGMDIHLQAGELAGWLNDAALPLWRQKGFDGEGGGFVETIDMKGEPTRDDRRSRVQPRQVYCFAAAGRRGWDGDWRTAAEGGLLYFDRVYGQPGGFYGALANADGKLIDASFDLYNQAFALLAFAHLAEVLPERGAEMVGRSDKLRRQLEARCKHPLAGFEEDDPPRLPLGSNPHMHLFEACLASEEVEGFDRVAWANLADEIAHLAMDRFIDAESGALREFFDHDWAPFPGEKGRIVEPGHLFEWAWLLLRWAERRGNAQAIVKARRLFEIGEKDGTCPDRDVVVMTLFDDFSVADPTARLWPQTEWLKAAIRFAALTEGAERERYLASAGRAAAALQRFLNVPVRGLWRDKQKADGSFVEEPAPASTFYHILCAIYELEDCLKRM</sequence>
<keyword id="KW-0413">Isomerase</keyword>
<keyword id="KW-1185">Reference proteome</keyword>
<organism>
    <name type="scientific">Rhizobium meliloti (strain 1021)</name>
    <name type="common">Ensifer meliloti</name>
    <name type="synonym">Sinorhizobium meliloti</name>
    <dbReference type="NCBI Taxonomy" id="266834"/>
    <lineage>
        <taxon>Bacteria</taxon>
        <taxon>Pseudomonadati</taxon>
        <taxon>Pseudomonadota</taxon>
        <taxon>Alphaproteobacteria</taxon>
        <taxon>Hyphomicrobiales</taxon>
        <taxon>Rhizobiaceae</taxon>
        <taxon>Sinorhizobium/Ensifer group</taxon>
        <taxon>Sinorhizobium</taxon>
    </lineage>
</organism>
<protein>
    <recommendedName>
        <fullName>Mannose-6-phosphate isomerase</fullName>
        <ecNumber>5.3.1.8</ecNumber>
    </recommendedName>
    <alternativeName>
        <fullName>Phosphohexomutase</fullName>
    </alternativeName>
    <alternativeName>
        <fullName>Phosphomannose isomerase</fullName>
        <shortName>PMI</shortName>
    </alternativeName>
</protein>